<proteinExistence type="inferred from homology"/>
<comment type="function">
    <text evidence="1">Vacuolar carboxypeptidase involved in degradation of small peptides. Digests preferentially peptides containing an aliphatic or hydrophobic residue in P1' position, as well as methionine, leucine or phenylalanine in P1 position of ester substrate (By similarity).</text>
</comment>
<comment type="catalytic activity">
    <reaction evidence="3">
        <text>Release of a C-terminal amino acid with broad specificity.</text>
        <dbReference type="EC" id="3.4.16.5"/>
    </reaction>
</comment>
<comment type="subcellular location">
    <subcellularLocation>
        <location evidence="1">Vacuole</location>
    </subcellularLocation>
</comment>
<comment type="similarity">
    <text evidence="4">Belongs to the peptidase S10 family.</text>
</comment>
<protein>
    <recommendedName>
        <fullName>Carboxypeptidase Y homolog A</fullName>
        <ecNumber>3.4.16.5</ecNumber>
    </recommendedName>
</protein>
<evidence type="ECO:0000250" key="1"/>
<evidence type="ECO:0000255" key="2"/>
<evidence type="ECO:0000255" key="3">
    <source>
        <dbReference type="PROSITE-ProRule" id="PRU10074"/>
    </source>
</evidence>
<evidence type="ECO:0000305" key="4"/>
<organism>
    <name type="scientific">Trichophyton rubrum</name>
    <name type="common">Athlete's foot fungus</name>
    <name type="synonym">Epidermophyton rubrum</name>
    <dbReference type="NCBI Taxonomy" id="5551"/>
    <lineage>
        <taxon>Eukaryota</taxon>
        <taxon>Fungi</taxon>
        <taxon>Dikarya</taxon>
        <taxon>Ascomycota</taxon>
        <taxon>Pezizomycotina</taxon>
        <taxon>Eurotiomycetes</taxon>
        <taxon>Eurotiomycetidae</taxon>
        <taxon>Onygenales</taxon>
        <taxon>Arthrodermataceae</taxon>
        <taxon>Trichophyton</taxon>
    </lineage>
</organism>
<gene>
    <name type="primary">cpyA</name>
    <name type="synonym">ScpC</name>
</gene>
<sequence length="536" mass="60099">MKFFTTGLLATAALAAAQEQQVLQAEDGMGRAPLPDSSIFDETLQKFQSSLEDGISHFWSEMKTNFKDYLPLISLPKKHTRRPDSEWDHVVRGADIESVWVQGADGEKRREIDGKLHNYDLRVKAVDPGVKQYSGYLDDNDADKHLFYWFFESRNDPKNDPVVLWLNGGPGCSSLTGLFLELGPATIDKNLKVVSNPYSWNSNASVIFLDQPVNVGFSYSGSSVSDTVAAGKDVYALLTLFFKQFPEYATQDFHISGESYAGHYIPVFAAEILSHKNTNINLKSALIGNGLTDPLTQYPQYRPMACGEGGYPAVLDQGTCRSMDNSLERCLSLIETCYSSESAWVCVPAAMYCNSAILAPYQQTGMNPYDVRTKCEDMASLCYPQLNAITEWLNQKPVMQALGVEVESYESCNSGINRDFLFHGDWMKPYHRLVPSVLEKIPVLIYAGDADFICNWLGNKAWTEALEWPGHKKFAETKLEDLKIVDNKNKGKKIGQVKSSGNFTFMRIFGAGHMVPLNQPEASLEFLNRWLRGEWH</sequence>
<feature type="signal peptide" evidence="2">
    <location>
        <begin position="1"/>
        <end position="17"/>
    </location>
</feature>
<feature type="propeptide" id="PRO_0000407484" evidence="1">
    <location>
        <begin position="18"/>
        <end position="124"/>
    </location>
</feature>
<feature type="chain" id="PRO_0000407485" description="Carboxypeptidase Y homolog A">
    <location>
        <begin position="125"/>
        <end position="536"/>
    </location>
</feature>
<feature type="active site" evidence="3">
    <location>
        <position position="259"/>
    </location>
</feature>
<feature type="active site" evidence="3">
    <location>
        <position position="451"/>
    </location>
</feature>
<feature type="active site" evidence="3">
    <location>
        <position position="513"/>
    </location>
</feature>
<feature type="glycosylation site" description="N-linked (GlcNAc...) asparagine" evidence="2">
    <location>
        <position position="203"/>
    </location>
</feature>
<feature type="glycosylation site" description="N-linked (GlcNAc...) asparagine" evidence="2">
    <location>
        <position position="502"/>
    </location>
</feature>
<feature type="disulfide bond" evidence="1">
    <location>
        <begin position="172"/>
        <end position="412"/>
    </location>
</feature>
<feature type="disulfide bond" evidence="1">
    <location>
        <begin position="306"/>
        <end position="320"/>
    </location>
</feature>
<feature type="disulfide bond" evidence="1">
    <location>
        <begin position="330"/>
        <end position="353"/>
    </location>
</feature>
<feature type="disulfide bond" evidence="1">
    <location>
        <begin position="337"/>
        <end position="346"/>
    </location>
</feature>
<feature type="disulfide bond" evidence="1">
    <location>
        <begin position="375"/>
        <end position="382"/>
    </location>
</feature>
<reference key="1">
    <citation type="journal article" date="2008" name="Int. J. Med. Microbiol.">
        <title>Trichophyton rubrum secreted and membrane-associated carboxypeptidases.</title>
        <authorList>
            <person name="Zaugg C."/>
            <person name="Jousson O."/>
            <person name="Lechenne B."/>
            <person name="Staib P."/>
            <person name="Monod M."/>
        </authorList>
    </citation>
    <scope>NUCLEOTIDE SEQUENCE [GENOMIC DNA]</scope>
</reference>
<keyword id="KW-0121">Carboxypeptidase</keyword>
<keyword id="KW-1015">Disulfide bond</keyword>
<keyword id="KW-0325">Glycoprotein</keyword>
<keyword id="KW-0378">Hydrolase</keyword>
<keyword id="KW-0645">Protease</keyword>
<keyword id="KW-0732">Signal</keyword>
<keyword id="KW-0926">Vacuole</keyword>
<keyword id="KW-0865">Zymogen</keyword>
<dbReference type="EC" id="3.4.16.5"/>
<dbReference type="EMBL" id="AY497024">
    <property type="protein sequence ID" value="AAS76668.1"/>
    <property type="molecule type" value="Genomic_DNA"/>
</dbReference>
<dbReference type="SMR" id="Q5J6J0"/>
<dbReference type="ESTHER" id="triru-q5j6j0">
    <property type="family name" value="Carboxypeptidase_S10"/>
</dbReference>
<dbReference type="MEROPS" id="S10.001"/>
<dbReference type="GlyCosmos" id="Q5J6J0">
    <property type="glycosylation" value="2 sites, No reported glycans"/>
</dbReference>
<dbReference type="VEuPathDB" id="FungiDB:TERG_08255"/>
<dbReference type="GO" id="GO:0000324">
    <property type="term" value="C:fungal-type vacuole"/>
    <property type="evidence" value="ECO:0007669"/>
    <property type="project" value="TreeGrafter"/>
</dbReference>
<dbReference type="GO" id="GO:0004185">
    <property type="term" value="F:serine-type carboxypeptidase activity"/>
    <property type="evidence" value="ECO:0007669"/>
    <property type="project" value="UniProtKB-EC"/>
</dbReference>
<dbReference type="GO" id="GO:0006508">
    <property type="term" value="P:proteolysis"/>
    <property type="evidence" value="ECO:0007669"/>
    <property type="project" value="UniProtKB-KW"/>
</dbReference>
<dbReference type="FunFam" id="1.10.287.410:FF:000001">
    <property type="entry name" value="Carboxypeptidase Y"/>
    <property type="match status" value="1"/>
</dbReference>
<dbReference type="Gene3D" id="1.10.287.410">
    <property type="match status" value="1"/>
</dbReference>
<dbReference type="Gene3D" id="3.40.50.1820">
    <property type="entry name" value="alpha/beta hydrolase"/>
    <property type="match status" value="1"/>
</dbReference>
<dbReference type="InterPro" id="IPR029058">
    <property type="entry name" value="AB_hydrolase_fold"/>
</dbReference>
<dbReference type="InterPro" id="IPR001563">
    <property type="entry name" value="Peptidase_S10"/>
</dbReference>
<dbReference type="InterPro" id="IPR018202">
    <property type="entry name" value="Ser_caboxypep_ser_AS"/>
</dbReference>
<dbReference type="PANTHER" id="PTHR11802:SF113">
    <property type="entry name" value="SERINE CARBOXYPEPTIDASE CTSA-4.1"/>
    <property type="match status" value="1"/>
</dbReference>
<dbReference type="PANTHER" id="PTHR11802">
    <property type="entry name" value="SERINE PROTEASE FAMILY S10 SERINE CARBOXYPEPTIDASE"/>
    <property type="match status" value="1"/>
</dbReference>
<dbReference type="Pfam" id="PF00450">
    <property type="entry name" value="Peptidase_S10"/>
    <property type="match status" value="1"/>
</dbReference>
<dbReference type="PRINTS" id="PR00724">
    <property type="entry name" value="CRBOXYPTASEC"/>
</dbReference>
<dbReference type="SUPFAM" id="SSF53474">
    <property type="entry name" value="alpha/beta-Hydrolases"/>
    <property type="match status" value="1"/>
</dbReference>
<dbReference type="PROSITE" id="PS00131">
    <property type="entry name" value="CARBOXYPEPT_SER_SER"/>
    <property type="match status" value="1"/>
</dbReference>
<accession>Q5J6J0</accession>
<name>CBPYA_TRIRU</name>